<dbReference type="EC" id="2.7.7.38" evidence="1"/>
<dbReference type="EMBL" id="AM933172">
    <property type="protein sequence ID" value="CAR32475.1"/>
    <property type="molecule type" value="Genomic_DNA"/>
</dbReference>
<dbReference type="RefSeq" id="WP_000011577.1">
    <property type="nucleotide sequence ID" value="NC_011294.1"/>
</dbReference>
<dbReference type="SMR" id="B5QZC2"/>
<dbReference type="KEGG" id="set:SEN0892"/>
<dbReference type="HOGENOM" id="CLU_065038_1_0_6"/>
<dbReference type="UniPathway" id="UPA00030"/>
<dbReference type="UniPathway" id="UPA00358">
    <property type="reaction ID" value="UER00476"/>
</dbReference>
<dbReference type="Proteomes" id="UP000000613">
    <property type="component" value="Chromosome"/>
</dbReference>
<dbReference type="GO" id="GO:0005829">
    <property type="term" value="C:cytosol"/>
    <property type="evidence" value="ECO:0007669"/>
    <property type="project" value="TreeGrafter"/>
</dbReference>
<dbReference type="GO" id="GO:0008690">
    <property type="term" value="F:3-deoxy-manno-octulosonate cytidylyltransferase activity"/>
    <property type="evidence" value="ECO:0007669"/>
    <property type="project" value="UniProtKB-UniRule"/>
</dbReference>
<dbReference type="GO" id="GO:0033468">
    <property type="term" value="P:CMP-keto-3-deoxy-D-manno-octulosonic acid biosynthetic process"/>
    <property type="evidence" value="ECO:0007669"/>
    <property type="project" value="UniProtKB-UniRule"/>
</dbReference>
<dbReference type="GO" id="GO:0009103">
    <property type="term" value="P:lipopolysaccharide biosynthetic process"/>
    <property type="evidence" value="ECO:0007669"/>
    <property type="project" value="UniProtKB-UniRule"/>
</dbReference>
<dbReference type="CDD" id="cd02517">
    <property type="entry name" value="CMP-KDO-Synthetase"/>
    <property type="match status" value="1"/>
</dbReference>
<dbReference type="FunFam" id="3.90.550.10:FF:000011">
    <property type="entry name" value="3-deoxy-manno-octulosonate cytidylyltransferase"/>
    <property type="match status" value="1"/>
</dbReference>
<dbReference type="Gene3D" id="3.90.550.10">
    <property type="entry name" value="Spore Coat Polysaccharide Biosynthesis Protein SpsA, Chain A"/>
    <property type="match status" value="1"/>
</dbReference>
<dbReference type="HAMAP" id="MF_00057">
    <property type="entry name" value="KdsB"/>
    <property type="match status" value="1"/>
</dbReference>
<dbReference type="InterPro" id="IPR003329">
    <property type="entry name" value="Cytidylyl_trans"/>
</dbReference>
<dbReference type="InterPro" id="IPR004528">
    <property type="entry name" value="KdsB"/>
</dbReference>
<dbReference type="InterPro" id="IPR029044">
    <property type="entry name" value="Nucleotide-diphossugar_trans"/>
</dbReference>
<dbReference type="NCBIfam" id="TIGR00466">
    <property type="entry name" value="kdsB"/>
    <property type="match status" value="1"/>
</dbReference>
<dbReference type="NCBIfam" id="NF003950">
    <property type="entry name" value="PRK05450.1-3"/>
    <property type="match status" value="1"/>
</dbReference>
<dbReference type="NCBIfam" id="NF003952">
    <property type="entry name" value="PRK05450.1-5"/>
    <property type="match status" value="1"/>
</dbReference>
<dbReference type="NCBIfam" id="NF009905">
    <property type="entry name" value="PRK13368.1"/>
    <property type="match status" value="1"/>
</dbReference>
<dbReference type="PANTHER" id="PTHR42866">
    <property type="entry name" value="3-DEOXY-MANNO-OCTULOSONATE CYTIDYLYLTRANSFERASE"/>
    <property type="match status" value="1"/>
</dbReference>
<dbReference type="PANTHER" id="PTHR42866:SF2">
    <property type="entry name" value="3-DEOXY-MANNO-OCTULOSONATE CYTIDYLYLTRANSFERASE, MITOCHONDRIAL"/>
    <property type="match status" value="1"/>
</dbReference>
<dbReference type="Pfam" id="PF02348">
    <property type="entry name" value="CTP_transf_3"/>
    <property type="match status" value="1"/>
</dbReference>
<dbReference type="SUPFAM" id="SSF53448">
    <property type="entry name" value="Nucleotide-diphospho-sugar transferases"/>
    <property type="match status" value="1"/>
</dbReference>
<sequence length="248" mass="27463">MSFVVIIPARFSSTRLPGKPLVDINGKPMIVHVLERARESGAERIIVATDHEDVARAVEAAGGEVCMTRADHQSGTERLAEVVEKCGFSDDTVIVNVQGDEPMIPAVIIRQVAENLAQRQVGMATLAVPIHSAEEAFNPNAVKVVLDAEGYALYFSRATIPWDRDRFAKSLETVGDTCLRHLGIYGYRAGFIRRYVSWQPSQLEHIEMLEQLRVLWYGEKIHVAVAKAVPGTGVDTADDLERVRAEMR</sequence>
<proteinExistence type="inferred from homology"/>
<accession>B5QZC2</accession>
<keyword id="KW-0963">Cytoplasm</keyword>
<keyword id="KW-0448">Lipopolysaccharide biosynthesis</keyword>
<keyword id="KW-0548">Nucleotidyltransferase</keyword>
<keyword id="KW-0808">Transferase</keyword>
<organism>
    <name type="scientific">Salmonella enteritidis PT4 (strain P125109)</name>
    <dbReference type="NCBI Taxonomy" id="550537"/>
    <lineage>
        <taxon>Bacteria</taxon>
        <taxon>Pseudomonadati</taxon>
        <taxon>Pseudomonadota</taxon>
        <taxon>Gammaproteobacteria</taxon>
        <taxon>Enterobacterales</taxon>
        <taxon>Enterobacteriaceae</taxon>
        <taxon>Salmonella</taxon>
    </lineage>
</organism>
<reference key="1">
    <citation type="journal article" date="2008" name="Genome Res.">
        <title>Comparative genome analysis of Salmonella enteritidis PT4 and Salmonella gallinarum 287/91 provides insights into evolutionary and host adaptation pathways.</title>
        <authorList>
            <person name="Thomson N.R."/>
            <person name="Clayton D.J."/>
            <person name="Windhorst D."/>
            <person name="Vernikos G."/>
            <person name="Davidson S."/>
            <person name="Churcher C."/>
            <person name="Quail M.A."/>
            <person name="Stevens M."/>
            <person name="Jones M.A."/>
            <person name="Watson M."/>
            <person name="Barron A."/>
            <person name="Layton A."/>
            <person name="Pickard D."/>
            <person name="Kingsley R.A."/>
            <person name="Bignell A."/>
            <person name="Clark L."/>
            <person name="Harris B."/>
            <person name="Ormond D."/>
            <person name="Abdellah Z."/>
            <person name="Brooks K."/>
            <person name="Cherevach I."/>
            <person name="Chillingworth T."/>
            <person name="Woodward J."/>
            <person name="Norberczak H."/>
            <person name="Lord A."/>
            <person name="Arrowsmith C."/>
            <person name="Jagels K."/>
            <person name="Moule S."/>
            <person name="Mungall K."/>
            <person name="Saunders M."/>
            <person name="Whitehead S."/>
            <person name="Chabalgoity J.A."/>
            <person name="Maskell D."/>
            <person name="Humphreys T."/>
            <person name="Roberts M."/>
            <person name="Barrow P.A."/>
            <person name="Dougan G."/>
            <person name="Parkhill J."/>
        </authorList>
    </citation>
    <scope>NUCLEOTIDE SEQUENCE [LARGE SCALE GENOMIC DNA]</scope>
    <source>
        <strain>P125109</strain>
    </source>
</reference>
<evidence type="ECO:0000255" key="1">
    <source>
        <dbReference type="HAMAP-Rule" id="MF_00057"/>
    </source>
</evidence>
<feature type="chain" id="PRO_1000091901" description="3-deoxy-manno-octulosonate cytidylyltransferase">
    <location>
        <begin position="1"/>
        <end position="248"/>
    </location>
</feature>
<protein>
    <recommendedName>
        <fullName evidence="1">3-deoxy-manno-octulosonate cytidylyltransferase</fullName>
        <ecNumber evidence="1">2.7.7.38</ecNumber>
    </recommendedName>
    <alternativeName>
        <fullName evidence="1">CMP-2-keto-3-deoxyoctulosonic acid synthase</fullName>
        <shortName evidence="1">CKS</shortName>
        <shortName evidence="1">CMP-KDO synthase</shortName>
    </alternativeName>
</protein>
<name>KDSB_SALEP</name>
<comment type="function">
    <text evidence="1">Activates KDO (a required 8-carbon sugar) for incorporation into bacterial lipopolysaccharide in Gram-negative bacteria.</text>
</comment>
<comment type="catalytic activity">
    <reaction evidence="1">
        <text>3-deoxy-alpha-D-manno-oct-2-ulosonate + CTP = CMP-3-deoxy-beta-D-manno-octulosonate + diphosphate</text>
        <dbReference type="Rhea" id="RHEA:23448"/>
        <dbReference type="ChEBI" id="CHEBI:33019"/>
        <dbReference type="ChEBI" id="CHEBI:37563"/>
        <dbReference type="ChEBI" id="CHEBI:85986"/>
        <dbReference type="ChEBI" id="CHEBI:85987"/>
        <dbReference type="EC" id="2.7.7.38"/>
    </reaction>
</comment>
<comment type="pathway">
    <text evidence="1">Nucleotide-sugar biosynthesis; CMP-3-deoxy-D-manno-octulosonate biosynthesis; CMP-3-deoxy-D-manno-octulosonate from 3-deoxy-D-manno-octulosonate and CTP: step 1/1.</text>
</comment>
<comment type="pathway">
    <text evidence="1">Bacterial outer membrane biogenesis; lipopolysaccharide biosynthesis.</text>
</comment>
<comment type="subcellular location">
    <subcellularLocation>
        <location evidence="1">Cytoplasm</location>
    </subcellularLocation>
</comment>
<comment type="similarity">
    <text evidence="1">Belongs to the KdsB family.</text>
</comment>
<gene>
    <name evidence="1" type="primary">kdsB</name>
    <name type="ordered locus">SEN0892</name>
</gene>